<evidence type="ECO:0000305" key="1"/>
<organism>
    <name type="scientific">Arabidopsis thaliana</name>
    <name type="common">Mouse-ear cress</name>
    <dbReference type="NCBI Taxonomy" id="3702"/>
    <lineage>
        <taxon>Eukaryota</taxon>
        <taxon>Viridiplantae</taxon>
        <taxon>Streptophyta</taxon>
        <taxon>Embryophyta</taxon>
        <taxon>Tracheophyta</taxon>
        <taxon>Spermatophyta</taxon>
        <taxon>Magnoliopsida</taxon>
        <taxon>eudicotyledons</taxon>
        <taxon>Gunneridae</taxon>
        <taxon>Pentapetalae</taxon>
        <taxon>rosids</taxon>
        <taxon>malvids</taxon>
        <taxon>Brassicales</taxon>
        <taxon>Brassicaceae</taxon>
        <taxon>Camelineae</taxon>
        <taxon>Arabidopsis</taxon>
    </lineage>
</organism>
<comment type="subcellular location">
    <subcellularLocation>
        <location evidence="1">Mitochondrion</location>
    </subcellularLocation>
</comment>
<comment type="miscellaneous">
    <text>A stretch of 270 kb of the mitochondrial genome is duplicated within the centromere of chromosome 2 resulting in the duplication of the gene. The expression of this duplicated gene (At2g07678) is demonstrated.</text>
</comment>
<comment type="sequence caution" evidence="1">
    <conflict type="frameshift">
        <sequence resource="EMBL-CDS" id="AAM15414"/>
    </conflict>
</comment>
<comment type="sequence caution" evidence="1">
    <conflict type="frameshift">
        <sequence resource="EMBL-CDS" id="AAM15507"/>
    </conflict>
</comment>
<comment type="sequence caution" evidence="1">
    <conflict type="frameshift">
        <sequence resource="EMBL-CDS" id="BAF01837"/>
    </conflict>
</comment>
<comment type="sequence caution" evidence="1">
    <conflict type="frameshift">
        <sequence resource="EMBL-CDS" id="BAF01926"/>
    </conflict>
</comment>
<gene>
    <name type="ordered locus">AtMg00920</name>
</gene>
<feature type="chain" id="PRO_0000196801" description="Uncharacterized mitochondrial protein AtMg00920">
    <location>
        <begin position="1"/>
        <end position="215"/>
    </location>
</feature>
<feature type="sequence conflict" description="In Ref. 4; BAF01837/BAF01926." evidence="1" ref="4">
    <original>A</original>
    <variation>G</variation>
    <location>
        <position position="118"/>
    </location>
</feature>
<feature type="sequence conflict" description="In Ref. 3; AAM15507." evidence="1" ref="3">
    <original>R</original>
    <variation>Q</variation>
    <location>
        <position position="193"/>
    </location>
</feature>
<proteinExistence type="evidence at transcript level"/>
<protein>
    <recommendedName>
        <fullName>Uncharacterized mitochondrial protein AtMg00920</fullName>
    </recommendedName>
    <alternativeName>
        <fullName>ORF215b</fullName>
    </alternativeName>
</protein>
<dbReference type="EMBL" id="Y08501">
    <property type="protein sequence ID" value="CAA69834.1"/>
    <property type="molecule type" value="Genomic_DNA"/>
</dbReference>
<dbReference type="EMBL" id="BK010421">
    <property type="status" value="NOT_ANNOTATED_CDS"/>
    <property type="molecule type" value="Genomic_DNA"/>
</dbReference>
<dbReference type="EMBL" id="AC007143">
    <property type="protein sequence ID" value="AAM15414.1"/>
    <property type="status" value="ALT_FRAME"/>
    <property type="molecule type" value="Genomic_DNA"/>
</dbReference>
<dbReference type="EMBL" id="AC007730">
    <property type="protein sequence ID" value="AAM15507.1"/>
    <property type="status" value="ALT_FRAME"/>
    <property type="molecule type" value="Genomic_DNA"/>
</dbReference>
<dbReference type="EMBL" id="AK230014">
    <property type="protein sequence ID" value="BAF01837.1"/>
    <property type="status" value="ALT_FRAME"/>
    <property type="molecule type" value="mRNA"/>
</dbReference>
<dbReference type="EMBL" id="AK230107">
    <property type="protein sequence ID" value="BAF01926.1"/>
    <property type="status" value="ALT_FRAME"/>
    <property type="molecule type" value="mRNA"/>
</dbReference>
<dbReference type="RefSeq" id="NP_085548.1">
    <property type="nucleotide sequence ID" value="NC_001284.2"/>
</dbReference>
<dbReference type="RefSeq" id="NP_565343.1">
    <property type="nucleotide sequence ID" value="NM_126735.3"/>
</dbReference>
<dbReference type="BioGRID" id="743">
    <property type="interactions" value="1"/>
</dbReference>
<dbReference type="STRING" id="3702.P92529"/>
<dbReference type="PaxDb" id="3702-ATMG00920.1"/>
<dbReference type="EnsemblPlants" id="ATMG00920.1">
    <property type="protein sequence ID" value="ATMG00920.1"/>
    <property type="gene ID" value="ATMG00920"/>
</dbReference>
<dbReference type="Gramene" id="ATMG00920.1">
    <property type="protein sequence ID" value="ATMG00920.1"/>
    <property type="gene ID" value="ATMG00920"/>
</dbReference>
<dbReference type="KEGG" id="ath:AT2G07678"/>
<dbReference type="Araport" id="ATMG00920"/>
<dbReference type="TAIR" id="ATMG00920">
    <property type="gene designation" value="ORF215B"/>
</dbReference>
<dbReference type="HOGENOM" id="CLU_1134881_0_0_1"/>
<dbReference type="InParanoid" id="P92529"/>
<dbReference type="OrthoDB" id="1115593at2759"/>
<dbReference type="PRO" id="PR:P92529"/>
<dbReference type="Proteomes" id="UP000006548">
    <property type="component" value="Mitochondrion MT"/>
</dbReference>
<dbReference type="GO" id="GO:0005739">
    <property type="term" value="C:mitochondrion"/>
    <property type="evidence" value="ECO:0007669"/>
    <property type="project" value="UniProtKB-SubCell"/>
</dbReference>
<geneLocation type="mitochondrion"/>
<keyword id="KW-0496">Mitochondrion</keyword>
<keyword id="KW-1185">Reference proteome</keyword>
<reference key="1">
    <citation type="journal article" date="1997" name="Nat. Genet.">
        <title>The mitochondrial genome of Arabidopsis thaliana contains 57 genes in 366,924 nucleotides.</title>
        <authorList>
            <person name="Unseld M."/>
            <person name="Marienfeld J.R."/>
            <person name="Brandt P."/>
            <person name="Brennicke A."/>
        </authorList>
    </citation>
    <scope>NUCLEOTIDE SEQUENCE [LARGE SCALE GENOMIC DNA]</scope>
    <source>
        <strain>cv. C24</strain>
    </source>
</reference>
<reference key="2">
    <citation type="journal article" date="2018" name="Plant Cell">
        <title>Correction of persistent errors in Arabidopsis reference mitochondrial genomes.</title>
        <authorList>
            <person name="Sloan D.B."/>
            <person name="Wu Z."/>
            <person name="Sharbrough J."/>
        </authorList>
    </citation>
    <scope>NUCLEOTIDE SEQUENCE [LARGE SCALE GENOMIC DNA]</scope>
    <source>
        <strain>cv. Columbia</strain>
    </source>
</reference>
<reference key="3">
    <citation type="journal article" date="1999" name="Nature">
        <title>Sequence and analysis of chromosome 2 of the plant Arabidopsis thaliana.</title>
        <authorList>
            <person name="Lin X."/>
            <person name="Kaul S."/>
            <person name="Rounsley S.D."/>
            <person name="Shea T.P."/>
            <person name="Benito M.-I."/>
            <person name="Town C.D."/>
            <person name="Fujii C.Y."/>
            <person name="Mason T.M."/>
            <person name="Bowman C.L."/>
            <person name="Barnstead M.E."/>
            <person name="Feldblyum T.V."/>
            <person name="Buell C.R."/>
            <person name="Ketchum K.A."/>
            <person name="Lee J.J."/>
            <person name="Ronning C.M."/>
            <person name="Koo H.L."/>
            <person name="Moffat K.S."/>
            <person name="Cronin L.A."/>
            <person name="Shen M."/>
            <person name="Pai G."/>
            <person name="Van Aken S."/>
            <person name="Umayam L."/>
            <person name="Tallon L.J."/>
            <person name="Gill J.E."/>
            <person name="Adams M.D."/>
            <person name="Carrera A.J."/>
            <person name="Creasy T.H."/>
            <person name="Goodman H.M."/>
            <person name="Somerville C.R."/>
            <person name="Copenhaver G.P."/>
            <person name="Preuss D."/>
            <person name="Nierman W.C."/>
            <person name="White O."/>
            <person name="Eisen J.A."/>
            <person name="Salzberg S.L."/>
            <person name="Fraser C.M."/>
            <person name="Venter J.C."/>
        </authorList>
    </citation>
    <scope>NUCLEOTIDE SEQUENCE [LARGE SCALE GENOMIC DNA] (AT2G07678)</scope>
    <source>
        <strain>cv. Columbia</strain>
    </source>
</reference>
<reference key="4">
    <citation type="submission" date="2006-07" db="EMBL/GenBank/DDBJ databases">
        <title>Large-scale analysis of RIKEN Arabidopsis full-length (RAFL) cDNAs.</title>
        <authorList>
            <person name="Totoki Y."/>
            <person name="Seki M."/>
            <person name="Ishida J."/>
            <person name="Nakajima M."/>
            <person name="Enju A."/>
            <person name="Kamiya A."/>
            <person name="Narusaka M."/>
            <person name="Shin-i T."/>
            <person name="Nakagawa M."/>
            <person name="Sakamoto N."/>
            <person name="Oishi K."/>
            <person name="Kohara Y."/>
            <person name="Kobayashi M."/>
            <person name="Toyoda A."/>
            <person name="Sakaki Y."/>
            <person name="Sakurai T."/>
            <person name="Iida K."/>
            <person name="Akiyama K."/>
            <person name="Satou M."/>
            <person name="Toyoda T."/>
            <person name="Konagaya A."/>
            <person name="Carninci P."/>
            <person name="Kawai J."/>
            <person name="Hayashizaki Y."/>
            <person name="Shinozaki K."/>
        </authorList>
    </citation>
    <scope>NUCLEOTIDE SEQUENCE [LARGE SCALE MRNA] (AT2G07678)</scope>
    <source>
        <strain>cv. Columbia</strain>
    </source>
</reference>
<accession>P92529</accession>
<accession>Q0WLT1</accession>
<accession>Q1ZXY3</accession>
<accession>Q8S881</accession>
<accession>Q8S8C0</accession>
<sequence>MKMKSPLFRGPLVNSSTENPIHILTREKLRHQTSGTNSTEKVILPNILHSYIKNLNLDFTSPYGSTGNNEVLSILRSRFKQSIFPSSGLKCLDTTGDFLIKNVLHKRYESVQKNISNALSSSINSRTAVFFCILFSITVLMEIAPGPLLKKPSLLFSDNLPNVLQYTRDVYVNHVCIIHKSLSPCECEEPLNRIIRDMFPQTTFDPLELQKPSPQ</sequence>
<name>M920_ARATH</name>